<sequence>MGAIDLSFSQSLLFSSSRSNLSSSTHRSVSFLPPGSKSRCLPPLRSMSHDDDTASKEVKLWGGRFEESVTEKVEKFTESISFDKVLYKQDIMGSKAHASMLAHQGLITDSDKDSILRGLDDIERQIEANKFEWRTDREDVHMNIEAALTDLIGEPAKKLHTARSRNDQVATDFRLWCRDAIDTIIVKIRNLQRALVELALKNEALIVPGYTHLQRAQPVLLPHVLLTFVEQLERDAGRYVDCRARLNFSPLGACALAGTGLPIDRFMTANALGFTEPMRNSIDAVSDRDFVLEFLYTNANTGIHLSRLGEEWVLWASEEFGFMTPSDSVSTGSSIMPQKKNPDPMELVRGKSARVIGDLVTVLTLCKGLPLAYNRDFQEDKEPMFDSTKTIMGMIDVSAEFAQNVTFNEDRIKKSLPAGHLDATTLADYLVKKGMPFRSSHDIVGKLVGVCVSKGCELQNLSLEEMKKLSPVFEEDVFGFLGVENSVNKFSSYGSTGSNCVAEQLGYWVNKLNITST</sequence>
<gene>
    <name type="ordered locus">At5g10920</name>
    <name type="ORF">T30N20.190</name>
</gene>
<feature type="transit peptide" description="Chloroplast" evidence="2">
    <location>
        <begin position="1"/>
        <end position="45"/>
    </location>
</feature>
<feature type="chain" id="PRO_0000423421" description="Argininosuccinate lyase, chloroplastic">
    <location>
        <begin position="46"/>
        <end position="517"/>
    </location>
</feature>
<feature type="active site" description="Proton acceptor" evidence="1">
    <location>
        <position position="212"/>
    </location>
</feature>
<feature type="active site" description="Proton donor" evidence="1">
    <location>
        <position position="333"/>
    </location>
</feature>
<feature type="binding site" description="in chain A" evidence="1">
    <location>
        <position position="79"/>
    </location>
    <ligand>
        <name>2-(N(omega)-L-arginino)succinate</name>
        <dbReference type="ChEBI" id="CHEBI:57472"/>
        <note>ligand shared between tetrameric partners</note>
    </ligand>
</feature>
<feature type="binding site" description="in chain A" evidence="1">
    <location>
        <position position="166"/>
    </location>
    <ligand>
        <name>2-(N(omega)-L-arginino)succinate</name>
        <dbReference type="ChEBI" id="CHEBI:57472"/>
        <note>ligand shared between tetrameric partners</note>
    </ligand>
</feature>
<feature type="binding site" description="in chain C" evidence="1">
    <location>
        <position position="211"/>
    </location>
    <ligand>
        <name>2-(N(omega)-L-arginino)succinate</name>
        <dbReference type="ChEBI" id="CHEBI:57472"/>
        <note>ligand shared between tetrameric partners</note>
    </ligand>
</feature>
<feature type="binding site" description="in chain B" evidence="1">
    <location>
        <position position="341"/>
    </location>
    <ligand>
        <name>2-(N(omega)-L-arginino)succinate</name>
        <dbReference type="ChEBI" id="CHEBI:57472"/>
        <note>ligand shared between tetrameric partners</note>
    </ligand>
</feature>
<feature type="binding site" description="in chain A" evidence="1">
    <location>
        <position position="373"/>
    </location>
    <ligand>
        <name>2-(N(omega)-L-arginino)succinate</name>
        <dbReference type="ChEBI" id="CHEBI:57472"/>
        <note>ligand shared between tetrameric partners</note>
    </ligand>
</feature>
<feature type="binding site" description="in chain A" evidence="1">
    <location>
        <position position="378"/>
    </location>
    <ligand>
        <name>2-(N(omega)-L-arginino)succinate</name>
        <dbReference type="ChEBI" id="CHEBI:57472"/>
        <note>ligand shared between tetrameric partners</note>
    </ligand>
</feature>
<feature type="binding site" description="in chain A" evidence="1">
    <location>
        <position position="381"/>
    </location>
    <ligand>
        <name>2-(N(omega)-L-arginino)succinate</name>
        <dbReference type="ChEBI" id="CHEBI:57472"/>
        <note>ligand shared between tetrameric partners</note>
    </ligand>
</feature>
<feature type="site" description="Increases basicity of active site His" evidence="1">
    <location>
        <position position="346"/>
    </location>
</feature>
<feature type="sequence conflict" description="In Ref. 4; AAK76572." evidence="3" ref="4">
    <original>H</original>
    <variation>L</variation>
    <location>
        <position position="141"/>
    </location>
</feature>
<feature type="sequence conflict" description="In Ref. 1; CAB10698." evidence="3" ref="1">
    <original>S</original>
    <variation>T</variation>
    <location>
        <position position="516"/>
    </location>
</feature>
<feature type="helix" evidence="4">
    <location>
        <begin position="69"/>
        <end position="77"/>
    </location>
</feature>
<feature type="helix" evidence="4">
    <location>
        <begin position="80"/>
        <end position="83"/>
    </location>
</feature>
<feature type="helix" evidence="4">
    <location>
        <begin position="84"/>
        <end position="86"/>
    </location>
</feature>
<feature type="helix" evidence="4">
    <location>
        <begin position="87"/>
        <end position="103"/>
    </location>
</feature>
<feature type="helix" evidence="4">
    <location>
        <begin position="109"/>
        <end position="127"/>
    </location>
</feature>
<feature type="helix" evidence="4">
    <location>
        <begin position="135"/>
        <end position="137"/>
    </location>
</feature>
<feature type="helix" evidence="4">
    <location>
        <begin position="140"/>
        <end position="152"/>
    </location>
</feature>
<feature type="helix" evidence="4">
    <location>
        <begin position="154"/>
        <end position="160"/>
    </location>
</feature>
<feature type="helix" evidence="4">
    <location>
        <begin position="165"/>
        <end position="201"/>
    </location>
</feature>
<feature type="turn" evidence="4">
    <location>
        <begin position="202"/>
        <end position="204"/>
    </location>
</feature>
<feature type="strand" evidence="4">
    <location>
        <begin position="206"/>
        <end position="211"/>
    </location>
</feature>
<feature type="strand" evidence="4">
    <location>
        <begin position="214"/>
        <end position="220"/>
    </location>
</feature>
<feature type="helix" evidence="4">
    <location>
        <begin position="221"/>
        <end position="246"/>
    </location>
</feature>
<feature type="turn" evidence="4">
    <location>
        <begin position="254"/>
        <end position="257"/>
    </location>
</feature>
<feature type="helix" evidence="4">
    <location>
        <begin position="265"/>
        <end position="271"/>
    </location>
</feature>
<feature type="strand" evidence="4">
    <location>
        <begin position="275"/>
        <end position="277"/>
    </location>
</feature>
<feature type="helix" evidence="4">
    <location>
        <begin position="281"/>
        <end position="286"/>
    </location>
</feature>
<feature type="helix" evidence="4">
    <location>
        <begin position="289"/>
        <end position="316"/>
    </location>
</feature>
<feature type="turn" evidence="4">
    <location>
        <begin position="318"/>
        <end position="320"/>
    </location>
</feature>
<feature type="strand" evidence="4">
    <location>
        <begin position="323"/>
        <end position="325"/>
    </location>
</feature>
<feature type="helix" evidence="4">
    <location>
        <begin position="327"/>
        <end position="329"/>
    </location>
</feature>
<feature type="strand" evidence="4">
    <location>
        <begin position="334"/>
        <end position="336"/>
    </location>
</feature>
<feature type="helix" evidence="4">
    <location>
        <begin position="343"/>
        <end position="366"/>
    </location>
</feature>
<feature type="strand" evidence="4">
    <location>
        <begin position="371"/>
        <end position="373"/>
    </location>
</feature>
<feature type="helix" evidence="4">
    <location>
        <begin position="375"/>
        <end position="380"/>
    </location>
</feature>
<feature type="helix" evidence="4">
    <location>
        <begin position="381"/>
        <end position="402"/>
    </location>
</feature>
<feature type="strand" evidence="4">
    <location>
        <begin position="405"/>
        <end position="407"/>
    </location>
</feature>
<feature type="helix" evidence="4">
    <location>
        <begin position="409"/>
        <end position="415"/>
    </location>
</feature>
<feature type="turn" evidence="4">
    <location>
        <begin position="416"/>
        <end position="419"/>
    </location>
</feature>
<feature type="helix" evidence="4">
    <location>
        <begin position="423"/>
        <end position="432"/>
    </location>
</feature>
<feature type="helix" evidence="4">
    <location>
        <begin position="437"/>
        <end position="449"/>
    </location>
</feature>
<feature type="helix" evidence="4">
    <location>
        <begin position="458"/>
        <end position="460"/>
    </location>
</feature>
<feature type="helix" evidence="4">
    <location>
        <begin position="463"/>
        <end position="467"/>
    </location>
</feature>
<feature type="helix" evidence="4">
    <location>
        <begin position="475"/>
        <end position="480"/>
    </location>
</feature>
<feature type="helix" evidence="4">
    <location>
        <begin position="483"/>
        <end position="489"/>
    </location>
</feature>
<feature type="helix" evidence="4">
    <location>
        <begin position="498"/>
        <end position="511"/>
    </location>
</feature>
<dbReference type="EC" id="4.3.2.1"/>
<dbReference type="EMBL" id="Z97558">
    <property type="protein sequence ID" value="CAB10698.1"/>
    <property type="molecule type" value="mRNA"/>
</dbReference>
<dbReference type="EMBL" id="AL365234">
    <property type="protein sequence ID" value="CAB96847.1"/>
    <property type="molecule type" value="Genomic_DNA"/>
</dbReference>
<dbReference type="EMBL" id="CP002688">
    <property type="protein sequence ID" value="AED91609.1"/>
    <property type="molecule type" value="Genomic_DNA"/>
</dbReference>
<dbReference type="EMBL" id="AY045898">
    <property type="protein sequence ID" value="AAK76572.1"/>
    <property type="molecule type" value="mRNA"/>
</dbReference>
<dbReference type="EMBL" id="BT000891">
    <property type="protein sequence ID" value="AAN41291.1"/>
    <property type="molecule type" value="mRNA"/>
</dbReference>
<dbReference type="PIR" id="T50801">
    <property type="entry name" value="T50801"/>
</dbReference>
<dbReference type="RefSeq" id="NP_196653.1">
    <property type="nucleotide sequence ID" value="NM_121130.3"/>
</dbReference>
<dbReference type="PDB" id="9GGI">
    <property type="method" value="X-ray"/>
    <property type="resolution" value="1.55 A"/>
    <property type="chains" value="A/B/C/D/E/F/G/H=56-517"/>
</dbReference>
<dbReference type="PDB" id="9GGJ">
    <property type="method" value="X-ray"/>
    <property type="resolution" value="2.00 A"/>
    <property type="chains" value="A/B/C/D/E/F/G/H=56-517"/>
</dbReference>
<dbReference type="PDBsum" id="9GGI"/>
<dbReference type="PDBsum" id="9GGJ"/>
<dbReference type="SMR" id="Q9LEU8"/>
<dbReference type="BioGRID" id="16237">
    <property type="interactions" value="2"/>
</dbReference>
<dbReference type="FunCoup" id="Q9LEU8">
    <property type="interactions" value="1906"/>
</dbReference>
<dbReference type="IntAct" id="Q9LEU8">
    <property type="interactions" value="1"/>
</dbReference>
<dbReference type="STRING" id="3702.Q9LEU8"/>
<dbReference type="PaxDb" id="3702-AT5G10920.1"/>
<dbReference type="ProMEX" id="Q9LEU8"/>
<dbReference type="ProteomicsDB" id="246993"/>
<dbReference type="EnsemblPlants" id="AT5G10920.1">
    <property type="protein sequence ID" value="AT5G10920.1"/>
    <property type="gene ID" value="AT5G10920"/>
</dbReference>
<dbReference type="GeneID" id="830959"/>
<dbReference type="Gramene" id="AT5G10920.1">
    <property type="protein sequence ID" value="AT5G10920.1"/>
    <property type="gene ID" value="AT5G10920"/>
</dbReference>
<dbReference type="KEGG" id="ath:AT5G10920"/>
<dbReference type="Araport" id="AT5G10920"/>
<dbReference type="TAIR" id="AT5G10920"/>
<dbReference type="eggNOG" id="KOG1316">
    <property type="taxonomic scope" value="Eukaryota"/>
</dbReference>
<dbReference type="HOGENOM" id="CLU_027272_2_3_1"/>
<dbReference type="InParanoid" id="Q9LEU8"/>
<dbReference type="OMA" id="DFAIEFC"/>
<dbReference type="PhylomeDB" id="Q9LEU8"/>
<dbReference type="BioCyc" id="ARA:AT5G10920-MONOMER"/>
<dbReference type="UniPathway" id="UPA00068">
    <property type="reaction ID" value="UER00114"/>
</dbReference>
<dbReference type="PRO" id="PR:Q9LEU8"/>
<dbReference type="Proteomes" id="UP000006548">
    <property type="component" value="Chromosome 5"/>
</dbReference>
<dbReference type="ExpressionAtlas" id="Q9LEU8">
    <property type="expression patterns" value="baseline and differential"/>
</dbReference>
<dbReference type="GO" id="GO:0009507">
    <property type="term" value="C:chloroplast"/>
    <property type="evidence" value="ECO:0007005"/>
    <property type="project" value="TAIR"/>
</dbReference>
<dbReference type="GO" id="GO:0009570">
    <property type="term" value="C:chloroplast stroma"/>
    <property type="evidence" value="ECO:0007005"/>
    <property type="project" value="TAIR"/>
</dbReference>
<dbReference type="GO" id="GO:0004056">
    <property type="term" value="F:argininosuccinate lyase activity"/>
    <property type="evidence" value="ECO:0007669"/>
    <property type="project" value="UniProtKB-EC"/>
</dbReference>
<dbReference type="GO" id="GO:0042450">
    <property type="term" value="P:arginine biosynthetic process via ornithine"/>
    <property type="evidence" value="ECO:0007669"/>
    <property type="project" value="InterPro"/>
</dbReference>
<dbReference type="GO" id="GO:0006526">
    <property type="term" value="P:L-arginine biosynthetic process"/>
    <property type="evidence" value="ECO:0007669"/>
    <property type="project" value="UniProtKB-UniPathway"/>
</dbReference>
<dbReference type="CDD" id="cd01359">
    <property type="entry name" value="Argininosuccinate_lyase"/>
    <property type="match status" value="1"/>
</dbReference>
<dbReference type="FunFam" id="1.10.275.10:FF:000013">
    <property type="entry name" value="Argininosuccinate lyase"/>
    <property type="match status" value="1"/>
</dbReference>
<dbReference type="FunFam" id="1.10.40.30:FF:000001">
    <property type="entry name" value="Argininosuccinate lyase"/>
    <property type="match status" value="1"/>
</dbReference>
<dbReference type="FunFam" id="1.20.200.10:FF:000019">
    <property type="entry name" value="Argininosuccinate lyase chloroplastic"/>
    <property type="match status" value="1"/>
</dbReference>
<dbReference type="Gene3D" id="1.10.40.30">
    <property type="entry name" value="Fumarase/aspartase (C-terminal domain)"/>
    <property type="match status" value="1"/>
</dbReference>
<dbReference type="Gene3D" id="1.20.200.10">
    <property type="entry name" value="Fumarase/aspartase (Central domain)"/>
    <property type="match status" value="1"/>
</dbReference>
<dbReference type="Gene3D" id="1.10.275.10">
    <property type="entry name" value="Fumarase/aspartase (N-terminal domain)"/>
    <property type="match status" value="1"/>
</dbReference>
<dbReference type="HAMAP" id="MF_00006">
    <property type="entry name" value="Arg_succ_lyase"/>
    <property type="match status" value="1"/>
</dbReference>
<dbReference type="InterPro" id="IPR029419">
    <property type="entry name" value="Arg_succ_lyase_C"/>
</dbReference>
<dbReference type="InterPro" id="IPR009049">
    <property type="entry name" value="Argininosuccinate_lyase"/>
</dbReference>
<dbReference type="InterPro" id="IPR024083">
    <property type="entry name" value="Fumarase/histidase_N"/>
</dbReference>
<dbReference type="InterPro" id="IPR020557">
    <property type="entry name" value="Fumarate_lyase_CS"/>
</dbReference>
<dbReference type="InterPro" id="IPR000362">
    <property type="entry name" value="Fumarate_lyase_fam"/>
</dbReference>
<dbReference type="InterPro" id="IPR022761">
    <property type="entry name" value="Fumarate_lyase_N"/>
</dbReference>
<dbReference type="InterPro" id="IPR008948">
    <property type="entry name" value="L-Aspartase-like"/>
</dbReference>
<dbReference type="NCBIfam" id="TIGR00838">
    <property type="entry name" value="argH"/>
    <property type="match status" value="1"/>
</dbReference>
<dbReference type="PANTHER" id="PTHR43814">
    <property type="entry name" value="ARGININOSUCCINATE LYASE"/>
    <property type="match status" value="1"/>
</dbReference>
<dbReference type="PANTHER" id="PTHR43814:SF1">
    <property type="entry name" value="ARGININOSUCCINATE LYASE"/>
    <property type="match status" value="1"/>
</dbReference>
<dbReference type="Pfam" id="PF14698">
    <property type="entry name" value="ASL_C2"/>
    <property type="match status" value="1"/>
</dbReference>
<dbReference type="Pfam" id="PF00206">
    <property type="entry name" value="Lyase_1"/>
    <property type="match status" value="1"/>
</dbReference>
<dbReference type="PRINTS" id="PR00145">
    <property type="entry name" value="ARGSUCLYASE"/>
</dbReference>
<dbReference type="PRINTS" id="PR00149">
    <property type="entry name" value="FUMRATELYASE"/>
</dbReference>
<dbReference type="SUPFAM" id="SSF48557">
    <property type="entry name" value="L-aspartase-like"/>
    <property type="match status" value="1"/>
</dbReference>
<dbReference type="PROSITE" id="PS00163">
    <property type="entry name" value="FUMARATE_LYASES"/>
    <property type="match status" value="1"/>
</dbReference>
<organism>
    <name type="scientific">Arabidopsis thaliana</name>
    <name type="common">Mouse-ear cress</name>
    <dbReference type="NCBI Taxonomy" id="3702"/>
    <lineage>
        <taxon>Eukaryota</taxon>
        <taxon>Viridiplantae</taxon>
        <taxon>Streptophyta</taxon>
        <taxon>Embryophyta</taxon>
        <taxon>Tracheophyta</taxon>
        <taxon>Spermatophyta</taxon>
        <taxon>Magnoliopsida</taxon>
        <taxon>eudicotyledons</taxon>
        <taxon>Gunneridae</taxon>
        <taxon>Pentapetalae</taxon>
        <taxon>rosids</taxon>
        <taxon>malvids</taxon>
        <taxon>Brassicales</taxon>
        <taxon>Brassicaceae</taxon>
        <taxon>Camelineae</taxon>
        <taxon>Arabidopsis</taxon>
    </lineage>
</organism>
<evidence type="ECO:0000250" key="1">
    <source>
        <dbReference type="UniProtKB" id="P24058"/>
    </source>
</evidence>
<evidence type="ECO:0000255" key="2"/>
<evidence type="ECO:0000305" key="3"/>
<evidence type="ECO:0007829" key="4">
    <source>
        <dbReference type="PDB" id="9GGI"/>
    </source>
</evidence>
<protein>
    <recommendedName>
        <fullName>Argininosuccinate lyase, chloroplastic</fullName>
        <ecNumber>4.3.2.1</ecNumber>
    </recommendedName>
    <alternativeName>
        <fullName>Arginosuccinase</fullName>
    </alternativeName>
</protein>
<comment type="catalytic activity">
    <reaction>
        <text>2-(N(omega)-L-arginino)succinate = fumarate + L-arginine</text>
        <dbReference type="Rhea" id="RHEA:24020"/>
        <dbReference type="ChEBI" id="CHEBI:29806"/>
        <dbReference type="ChEBI" id="CHEBI:32682"/>
        <dbReference type="ChEBI" id="CHEBI:57472"/>
        <dbReference type="EC" id="4.3.2.1"/>
    </reaction>
</comment>
<comment type="pathway">
    <text>Amino-acid biosynthesis; L-arginine biosynthesis; L-arginine from L-ornithine and carbamoyl phosphate: step 3/3.</text>
</comment>
<comment type="subcellular location">
    <subcellularLocation>
        <location evidence="3">Plastid</location>
        <location evidence="3">Chloroplast</location>
    </subcellularLocation>
</comment>
<comment type="similarity">
    <text evidence="3">Belongs to the lyase 1 family. Argininosuccinate lyase subfamily.</text>
</comment>
<proteinExistence type="evidence at protein level"/>
<name>ARLY_ARATH</name>
<keyword id="KW-0002">3D-structure</keyword>
<keyword id="KW-0028">Amino-acid biosynthesis</keyword>
<keyword id="KW-0055">Arginine biosynthesis</keyword>
<keyword id="KW-0150">Chloroplast</keyword>
<keyword id="KW-0456">Lyase</keyword>
<keyword id="KW-0934">Plastid</keyword>
<keyword id="KW-1185">Reference proteome</keyword>
<keyword id="KW-0809">Transit peptide</keyword>
<reference key="1">
    <citation type="submission" date="1997-07" db="EMBL/GenBank/DDBJ databases">
        <title>Cloning of a cDNA encoding argininosuccinate lyase from Arabidopsis thaliana by functional expression in yeast.</title>
        <authorList>
            <person name="Hansen A."/>
            <person name="Rognes S.E."/>
        </authorList>
    </citation>
    <scope>NUCLEOTIDE SEQUENCE [MRNA]</scope>
    <source>
        <strain>cv. Landsberg erecta</strain>
    </source>
</reference>
<reference key="2">
    <citation type="journal article" date="2000" name="Nature">
        <title>Sequence and analysis of chromosome 5 of the plant Arabidopsis thaliana.</title>
        <authorList>
            <person name="Tabata S."/>
            <person name="Kaneko T."/>
            <person name="Nakamura Y."/>
            <person name="Kotani H."/>
            <person name="Kato T."/>
            <person name="Asamizu E."/>
            <person name="Miyajima N."/>
            <person name="Sasamoto S."/>
            <person name="Kimura T."/>
            <person name="Hosouchi T."/>
            <person name="Kawashima K."/>
            <person name="Kohara M."/>
            <person name="Matsumoto M."/>
            <person name="Matsuno A."/>
            <person name="Muraki A."/>
            <person name="Nakayama S."/>
            <person name="Nakazaki N."/>
            <person name="Naruo K."/>
            <person name="Okumura S."/>
            <person name="Shinpo S."/>
            <person name="Takeuchi C."/>
            <person name="Wada T."/>
            <person name="Watanabe A."/>
            <person name="Yamada M."/>
            <person name="Yasuda M."/>
            <person name="Sato S."/>
            <person name="de la Bastide M."/>
            <person name="Huang E."/>
            <person name="Spiegel L."/>
            <person name="Gnoj L."/>
            <person name="O'Shaughnessy A."/>
            <person name="Preston R."/>
            <person name="Habermann K."/>
            <person name="Murray J."/>
            <person name="Johnson D."/>
            <person name="Rohlfing T."/>
            <person name="Nelson J."/>
            <person name="Stoneking T."/>
            <person name="Pepin K."/>
            <person name="Spieth J."/>
            <person name="Sekhon M."/>
            <person name="Armstrong J."/>
            <person name="Becker M."/>
            <person name="Belter E."/>
            <person name="Cordum H."/>
            <person name="Cordes M."/>
            <person name="Courtney L."/>
            <person name="Courtney W."/>
            <person name="Dante M."/>
            <person name="Du H."/>
            <person name="Edwards J."/>
            <person name="Fryman J."/>
            <person name="Haakensen B."/>
            <person name="Lamar E."/>
            <person name="Latreille P."/>
            <person name="Leonard S."/>
            <person name="Meyer R."/>
            <person name="Mulvaney E."/>
            <person name="Ozersky P."/>
            <person name="Riley A."/>
            <person name="Strowmatt C."/>
            <person name="Wagner-McPherson C."/>
            <person name="Wollam A."/>
            <person name="Yoakum M."/>
            <person name="Bell M."/>
            <person name="Dedhia N."/>
            <person name="Parnell L."/>
            <person name="Shah R."/>
            <person name="Rodriguez M."/>
            <person name="Hoon See L."/>
            <person name="Vil D."/>
            <person name="Baker J."/>
            <person name="Kirchoff K."/>
            <person name="Toth K."/>
            <person name="King L."/>
            <person name="Bahret A."/>
            <person name="Miller B."/>
            <person name="Marra M.A."/>
            <person name="Martienssen R."/>
            <person name="McCombie W.R."/>
            <person name="Wilson R.K."/>
            <person name="Murphy G."/>
            <person name="Bancroft I."/>
            <person name="Volckaert G."/>
            <person name="Wambutt R."/>
            <person name="Duesterhoeft A."/>
            <person name="Stiekema W."/>
            <person name="Pohl T."/>
            <person name="Entian K.-D."/>
            <person name="Terryn N."/>
            <person name="Hartley N."/>
            <person name="Bent E."/>
            <person name="Johnson S."/>
            <person name="Langham S.-A."/>
            <person name="McCullagh B."/>
            <person name="Robben J."/>
            <person name="Grymonprez B."/>
            <person name="Zimmermann W."/>
            <person name="Ramsperger U."/>
            <person name="Wedler H."/>
            <person name="Balke K."/>
            <person name="Wedler E."/>
            <person name="Peters S."/>
            <person name="van Staveren M."/>
            <person name="Dirkse W."/>
            <person name="Mooijman P."/>
            <person name="Klein Lankhorst R."/>
            <person name="Weitzenegger T."/>
            <person name="Bothe G."/>
            <person name="Rose M."/>
            <person name="Hauf J."/>
            <person name="Berneiser S."/>
            <person name="Hempel S."/>
            <person name="Feldpausch M."/>
            <person name="Lamberth S."/>
            <person name="Villarroel R."/>
            <person name="Gielen J."/>
            <person name="Ardiles W."/>
            <person name="Bents O."/>
            <person name="Lemcke K."/>
            <person name="Kolesov G."/>
            <person name="Mayer K.F.X."/>
            <person name="Rudd S."/>
            <person name="Schoof H."/>
            <person name="Schueller C."/>
            <person name="Zaccaria P."/>
            <person name="Mewes H.-W."/>
            <person name="Bevan M."/>
            <person name="Fransz P.F."/>
        </authorList>
    </citation>
    <scope>NUCLEOTIDE SEQUENCE [LARGE SCALE GENOMIC DNA]</scope>
    <source>
        <strain>cv. Columbia</strain>
    </source>
</reference>
<reference key="3">
    <citation type="journal article" date="2017" name="Plant J.">
        <title>Araport11: a complete reannotation of the Arabidopsis thaliana reference genome.</title>
        <authorList>
            <person name="Cheng C.Y."/>
            <person name="Krishnakumar V."/>
            <person name="Chan A.P."/>
            <person name="Thibaud-Nissen F."/>
            <person name="Schobel S."/>
            <person name="Town C.D."/>
        </authorList>
    </citation>
    <scope>GENOME REANNOTATION</scope>
    <source>
        <strain>cv. Columbia</strain>
    </source>
</reference>
<reference key="4">
    <citation type="journal article" date="2003" name="Science">
        <title>Empirical analysis of transcriptional activity in the Arabidopsis genome.</title>
        <authorList>
            <person name="Yamada K."/>
            <person name="Lim J."/>
            <person name="Dale J.M."/>
            <person name="Chen H."/>
            <person name="Shinn P."/>
            <person name="Palm C.J."/>
            <person name="Southwick A.M."/>
            <person name="Wu H.C."/>
            <person name="Kim C.J."/>
            <person name="Nguyen M."/>
            <person name="Pham P.K."/>
            <person name="Cheuk R.F."/>
            <person name="Karlin-Newmann G."/>
            <person name="Liu S.X."/>
            <person name="Lam B."/>
            <person name="Sakano H."/>
            <person name="Wu T."/>
            <person name="Yu G."/>
            <person name="Miranda M."/>
            <person name="Quach H.L."/>
            <person name="Tripp M."/>
            <person name="Chang C.H."/>
            <person name="Lee J.M."/>
            <person name="Toriumi M.J."/>
            <person name="Chan M.M."/>
            <person name="Tang C.C."/>
            <person name="Onodera C.S."/>
            <person name="Deng J.M."/>
            <person name="Akiyama K."/>
            <person name="Ansari Y."/>
            <person name="Arakawa T."/>
            <person name="Banh J."/>
            <person name="Banno F."/>
            <person name="Bowser L."/>
            <person name="Brooks S.Y."/>
            <person name="Carninci P."/>
            <person name="Chao Q."/>
            <person name="Choy N."/>
            <person name="Enju A."/>
            <person name="Goldsmith A.D."/>
            <person name="Gurjal M."/>
            <person name="Hansen N.F."/>
            <person name="Hayashizaki Y."/>
            <person name="Johnson-Hopson C."/>
            <person name="Hsuan V.W."/>
            <person name="Iida K."/>
            <person name="Karnes M."/>
            <person name="Khan S."/>
            <person name="Koesema E."/>
            <person name="Ishida J."/>
            <person name="Jiang P.X."/>
            <person name="Jones T."/>
            <person name="Kawai J."/>
            <person name="Kamiya A."/>
            <person name="Meyers C."/>
            <person name="Nakajima M."/>
            <person name="Narusaka M."/>
            <person name="Seki M."/>
            <person name="Sakurai T."/>
            <person name="Satou M."/>
            <person name="Tamse R."/>
            <person name="Vaysberg M."/>
            <person name="Wallender E.K."/>
            <person name="Wong C."/>
            <person name="Yamamura Y."/>
            <person name="Yuan S."/>
            <person name="Shinozaki K."/>
            <person name="Davis R.W."/>
            <person name="Theologis A."/>
            <person name="Ecker J.R."/>
        </authorList>
    </citation>
    <scope>NUCLEOTIDE SEQUENCE [LARGE SCALE MRNA]</scope>
    <source>
        <strain>cv. Columbia</strain>
    </source>
</reference>
<accession>Q9LEU8</accession>
<accession>O23637</accession>
<accession>Q94AP1</accession>